<evidence type="ECO:0000255" key="1">
    <source>
        <dbReference type="HAMAP-Rule" id="MF_01496"/>
    </source>
</evidence>
<geneLocation type="chloroplast"/>
<gene>
    <name evidence="1" type="primary">psbC</name>
</gene>
<sequence>MKTLYSLRRFYPVETLFNGTLALAGRDQETTGFAWWAGNARLINLSGKLLGAHVAHAGLIVFWAGAMNLFEVAHFVPEKPMYEQGLILLPHLATLGWGVGPGGEVVDTFPYFVSGVLHLISSAVLGFGGIYHALIGPETLEESLPFFGYVWKDRSKMTTILGIHLILLGVGAFLLVLKALYFGGVYDTWAPGGGDVRKITNLTLSPSVIFGYLLESPFGGEGWIVSVDNLEDIIGGHVWLGSICIFGGIWHILTKPFAWARRAFVWSGEAYLSYSLGALSVFGFIACCFVWFNNTAYPSEFYGPTGPEASQAQAFTFLVRDQRLGANVGSAQGPTGLGKYLMRSPTGEIIFGGETMRFWDLRAPWLEPLRGPNGLDLSRLKKDIQPWQERRSAEYMTHAPLGSLNSVGGVATEINAVNYVSPRSWLATSHFVLGFFFFVGHLWHAGRARAAAAGFEKGIDRDFEPVLSMNPLN</sequence>
<proteinExistence type="inferred from homology"/>
<organism>
    <name type="scientific">Cycas taitungensis</name>
    <name type="common">Prince sago</name>
    <name type="synonym">Cycas taiwaniana</name>
    <dbReference type="NCBI Taxonomy" id="54799"/>
    <lineage>
        <taxon>Eukaryota</taxon>
        <taxon>Viridiplantae</taxon>
        <taxon>Streptophyta</taxon>
        <taxon>Embryophyta</taxon>
        <taxon>Tracheophyta</taxon>
        <taxon>Spermatophyta</taxon>
        <taxon>Cycadidae</taxon>
        <taxon>Cycadales</taxon>
        <taxon>Cycadaceae</taxon>
        <taxon>Cycas</taxon>
    </lineage>
</organism>
<reference key="1">
    <citation type="journal article" date="2007" name="Mol. Biol. Evol.">
        <title>Chloroplast genome (cpDNA) of Cycas taitungensis and 56 cp protein-coding genes of Gnetum parvifolium: insights into cpDNA evolution and phylogeny of extant seed plants.</title>
        <authorList>
            <person name="Wu C.-S."/>
            <person name="Wang Y.-N."/>
            <person name="Liu S.-M."/>
            <person name="Chaw S.-M."/>
        </authorList>
    </citation>
    <scope>NUCLEOTIDE SEQUENCE [LARGE SCALE GENOMIC DNA]</scope>
</reference>
<feature type="propeptide" id="PRO_0000431138" evidence="1">
    <location>
        <begin position="1"/>
        <end position="14"/>
    </location>
</feature>
<feature type="chain" id="PRO_0000361370" description="Photosystem II CP43 reaction center protein" evidence="1">
    <location>
        <begin position="15"/>
        <end position="473"/>
    </location>
</feature>
<feature type="transmembrane region" description="Helical" evidence="1">
    <location>
        <begin position="69"/>
        <end position="93"/>
    </location>
</feature>
<feature type="transmembrane region" description="Helical" evidence="1">
    <location>
        <begin position="134"/>
        <end position="155"/>
    </location>
</feature>
<feature type="transmembrane region" description="Helical" evidence="1">
    <location>
        <begin position="178"/>
        <end position="200"/>
    </location>
</feature>
<feature type="transmembrane region" description="Helical" evidence="1">
    <location>
        <begin position="255"/>
        <end position="275"/>
    </location>
</feature>
<feature type="transmembrane region" description="Helical" evidence="1">
    <location>
        <begin position="291"/>
        <end position="312"/>
    </location>
</feature>
<feature type="transmembrane region" description="Helical" evidence="1">
    <location>
        <begin position="447"/>
        <end position="471"/>
    </location>
</feature>
<feature type="binding site" evidence="1">
    <location>
        <position position="367"/>
    </location>
    <ligand>
        <name>[CaMn4O5] cluster</name>
        <dbReference type="ChEBI" id="CHEBI:189552"/>
    </ligand>
</feature>
<feature type="modified residue" description="N-acetylthreonine" evidence="1">
    <location>
        <position position="15"/>
    </location>
</feature>
<feature type="modified residue" description="Phosphothreonine" evidence="1">
    <location>
        <position position="15"/>
    </location>
</feature>
<accession>A6H5G7</accession>
<name>PSBC_CYCTA</name>
<keyword id="KW-0007">Acetylation</keyword>
<keyword id="KW-0148">Chlorophyll</keyword>
<keyword id="KW-0150">Chloroplast</keyword>
<keyword id="KW-0157">Chromophore</keyword>
<keyword id="KW-0464">Manganese</keyword>
<keyword id="KW-0472">Membrane</keyword>
<keyword id="KW-0479">Metal-binding</keyword>
<keyword id="KW-0597">Phosphoprotein</keyword>
<keyword id="KW-0602">Photosynthesis</keyword>
<keyword id="KW-0604">Photosystem II</keyword>
<keyword id="KW-0934">Plastid</keyword>
<keyword id="KW-0793">Thylakoid</keyword>
<keyword id="KW-0812">Transmembrane</keyword>
<keyword id="KW-1133">Transmembrane helix</keyword>
<comment type="function">
    <text evidence="1">One of the components of the core complex of photosystem II (PSII). It binds chlorophyll and helps catalyze the primary light-induced photochemical processes of PSII. PSII is a light-driven water:plastoquinone oxidoreductase, using light energy to abstract electrons from H(2)O, generating O(2) and a proton gradient subsequently used for ATP formation.</text>
</comment>
<comment type="cofactor">
    <text evidence="1">Binds multiple chlorophylls and provides some of the ligands for the Ca-4Mn-5O cluster of the oxygen-evolving complex. It may also provide a ligand for a Cl- that is required for oxygen evolution. PSII binds additional chlorophylls, carotenoids and specific lipids.</text>
</comment>
<comment type="subunit">
    <text evidence="1">PSII is composed of 1 copy each of membrane proteins PsbA, PsbB, PsbC, PsbD, PsbE, PsbF, PsbH, PsbI, PsbJ, PsbK, PsbL, PsbM, PsbT, PsbX, PsbY, PsbZ, Psb30/Ycf12, at least 3 peripheral proteins of the oxygen-evolving complex and a large number of cofactors. It forms dimeric complexes.</text>
</comment>
<comment type="subcellular location">
    <subcellularLocation>
        <location evidence="1">Plastid</location>
        <location evidence="1">Chloroplast thylakoid membrane</location>
        <topology evidence="1">Multi-pass membrane protein</topology>
    </subcellularLocation>
</comment>
<comment type="similarity">
    <text evidence="1">Belongs to the PsbB/PsbC family. PsbC subfamily.</text>
</comment>
<dbReference type="EMBL" id="AP009339">
    <property type="protein sequence ID" value="BAF64933.1"/>
    <property type="molecule type" value="Genomic_DNA"/>
</dbReference>
<dbReference type="RefSeq" id="YP_001312192.1">
    <property type="nucleotide sequence ID" value="NC_009618.1"/>
</dbReference>
<dbReference type="SMR" id="A6H5G7"/>
<dbReference type="GeneID" id="5309629"/>
<dbReference type="GO" id="GO:0009535">
    <property type="term" value="C:chloroplast thylakoid membrane"/>
    <property type="evidence" value="ECO:0007669"/>
    <property type="project" value="UniProtKB-SubCell"/>
</dbReference>
<dbReference type="GO" id="GO:0009523">
    <property type="term" value="C:photosystem II"/>
    <property type="evidence" value="ECO:0007669"/>
    <property type="project" value="UniProtKB-KW"/>
</dbReference>
<dbReference type="GO" id="GO:0016168">
    <property type="term" value="F:chlorophyll binding"/>
    <property type="evidence" value="ECO:0007669"/>
    <property type="project" value="UniProtKB-UniRule"/>
</dbReference>
<dbReference type="GO" id="GO:0045156">
    <property type="term" value="F:electron transporter, transferring electrons within the cyclic electron transport pathway of photosynthesis activity"/>
    <property type="evidence" value="ECO:0007669"/>
    <property type="project" value="InterPro"/>
</dbReference>
<dbReference type="GO" id="GO:0046872">
    <property type="term" value="F:metal ion binding"/>
    <property type="evidence" value="ECO:0007669"/>
    <property type="project" value="UniProtKB-KW"/>
</dbReference>
<dbReference type="GO" id="GO:0009772">
    <property type="term" value="P:photosynthetic electron transport in photosystem II"/>
    <property type="evidence" value="ECO:0007669"/>
    <property type="project" value="InterPro"/>
</dbReference>
<dbReference type="FunFam" id="1.10.10.670:FF:000001">
    <property type="entry name" value="Photosystem II CP43 reaction center protein"/>
    <property type="match status" value="1"/>
</dbReference>
<dbReference type="Gene3D" id="1.10.10.670">
    <property type="entry name" value="photosystem ii from thermosynechococcus elongatus"/>
    <property type="match status" value="1"/>
</dbReference>
<dbReference type="HAMAP" id="MF_01496">
    <property type="entry name" value="PSII_PsbC_CP43"/>
    <property type="match status" value="1"/>
</dbReference>
<dbReference type="InterPro" id="IPR000932">
    <property type="entry name" value="PS_antenna-like"/>
</dbReference>
<dbReference type="InterPro" id="IPR036001">
    <property type="entry name" value="PS_II_antenna-like_sf"/>
</dbReference>
<dbReference type="InterPro" id="IPR005869">
    <property type="entry name" value="PSII_PsbC"/>
</dbReference>
<dbReference type="InterPro" id="IPR044900">
    <property type="entry name" value="PSII_PsbC_sf"/>
</dbReference>
<dbReference type="NCBIfam" id="TIGR01153">
    <property type="entry name" value="psbC"/>
    <property type="match status" value="1"/>
</dbReference>
<dbReference type="Pfam" id="PF00421">
    <property type="entry name" value="PSII"/>
    <property type="match status" value="1"/>
</dbReference>
<dbReference type="SUPFAM" id="SSF161077">
    <property type="entry name" value="Photosystem II antenna protein-like"/>
    <property type="match status" value="1"/>
</dbReference>
<protein>
    <recommendedName>
        <fullName evidence="1">Photosystem II CP43 reaction center protein</fullName>
    </recommendedName>
    <alternativeName>
        <fullName evidence="1">PSII 43 kDa protein</fullName>
    </alternativeName>
    <alternativeName>
        <fullName evidence="1">Protein CP-43</fullName>
    </alternativeName>
</protein>